<protein>
    <recommendedName>
        <fullName>Lysophosphatidic acid receptor 3</fullName>
        <shortName>LPA receptor 3</shortName>
        <shortName>LPA-3</shortName>
    </recommendedName>
    <alternativeName>
        <fullName>Lysophosphatidic acid receptor Edg-7</fullName>
    </alternativeName>
    <alternativeName>
        <fullName>snGPCR32</fullName>
    </alternativeName>
</protein>
<proteinExistence type="evidence at transcript level"/>
<name>LPAR3_RAT</name>
<feature type="chain" id="PRO_0000069435" description="Lysophosphatidic acid receptor 3">
    <location>
        <begin position="1"/>
        <end position="354"/>
    </location>
</feature>
<feature type="topological domain" description="Extracellular" evidence="2">
    <location>
        <begin position="1"/>
        <end position="31"/>
    </location>
</feature>
<feature type="transmembrane region" description="Helical; Name=1" evidence="2">
    <location>
        <begin position="32"/>
        <end position="52"/>
    </location>
</feature>
<feature type="topological domain" description="Cytoplasmic" evidence="2">
    <location>
        <begin position="53"/>
        <end position="67"/>
    </location>
</feature>
<feature type="transmembrane region" description="Helical; Name=2" evidence="2">
    <location>
        <begin position="68"/>
        <end position="88"/>
    </location>
</feature>
<feature type="topological domain" description="Extracellular" evidence="2">
    <location>
        <begin position="89"/>
        <end position="101"/>
    </location>
</feature>
<feature type="transmembrane region" description="Helical; Name=3" evidence="2">
    <location>
        <begin position="102"/>
        <end position="124"/>
    </location>
</feature>
<feature type="topological domain" description="Cytoplasmic" evidence="2">
    <location>
        <begin position="125"/>
        <end position="146"/>
    </location>
</feature>
<feature type="transmembrane region" description="Helical; Name=4" evidence="2">
    <location>
        <begin position="147"/>
        <end position="167"/>
    </location>
</feature>
<feature type="topological domain" description="Extracellular" evidence="2">
    <location>
        <begin position="168"/>
        <end position="186"/>
    </location>
</feature>
<feature type="transmembrane region" description="Helical; Name=5" evidence="2">
    <location>
        <begin position="187"/>
        <end position="207"/>
    </location>
</feature>
<feature type="topological domain" description="Cytoplasmic" evidence="2">
    <location>
        <begin position="208"/>
        <end position="240"/>
    </location>
</feature>
<feature type="transmembrane region" description="Helical; Name=6" evidence="2">
    <location>
        <begin position="241"/>
        <end position="261"/>
    </location>
</feature>
<feature type="topological domain" description="Extracellular" evidence="2">
    <location>
        <begin position="262"/>
        <end position="276"/>
    </location>
</feature>
<feature type="transmembrane region" description="Helical; Name=7" evidence="2">
    <location>
        <begin position="277"/>
        <end position="295"/>
    </location>
</feature>
<feature type="topological domain" description="Cytoplasmic" evidence="2">
    <location>
        <begin position="296"/>
        <end position="354"/>
    </location>
</feature>
<feature type="lipid moiety-binding region" description="S-palmitoyl cysteine" evidence="1">
    <location>
        <position position="309"/>
    </location>
</feature>
<feature type="glycosylation site" description="N-linked (GlcNAc...) asparagine" evidence="2">
    <location>
        <position position="15"/>
    </location>
</feature>
<feature type="glycosylation site" description="N-linked (GlcNAc...) asparagine" evidence="2">
    <location>
        <position position="172"/>
    </location>
</feature>
<feature type="sequence conflict" description="In Ref. 2; AAG24262." evidence="4" ref="2">
    <original>A</original>
    <variation>V</variation>
    <location>
        <position position="74"/>
    </location>
</feature>
<accession>Q8K5E0</accession>
<accession>Q9ESJ6</accession>
<gene>
    <name type="primary">Lpar3</name>
    <name type="synonym">Edg7</name>
    <name type="synonym">Lpa3</name>
</gene>
<keyword id="KW-1003">Cell membrane</keyword>
<keyword id="KW-0297">G-protein coupled receptor</keyword>
<keyword id="KW-0325">Glycoprotein</keyword>
<keyword id="KW-0449">Lipoprotein</keyword>
<keyword id="KW-0472">Membrane</keyword>
<keyword id="KW-0564">Palmitate</keyword>
<keyword id="KW-0675">Receptor</keyword>
<keyword id="KW-1185">Reference proteome</keyword>
<keyword id="KW-0807">Transducer</keyword>
<keyword id="KW-0812">Transmembrane</keyword>
<keyword id="KW-1133">Transmembrane helix</keyword>
<sequence length="354" mass="40287">MNECHYDKRMDFFYNRSNTDTADEWTGTKLVIVLCVGTFFCLFIFFSNSLVIAAVITNRKFHFPFYYLLANLAAADFFAGIAYVFLMFNTGPVSKTLTVNRWLLRQGLLDTSLTASLANLLVIAVERHMSIMRMRIHSNLTKKRVTLLILLVWAIAIFMGAVPTLGWNCLCNISACSSLAPIYSRSYLIFWTVSNLLAFFIMVVVYVRIYMYVKRKTNVLSPHTSGSISRRRAPMKLMKTVMTVLGAFVVCWTPGLVVLLLDGLNCKQCNVQHVKRWFLLLALLNSVMNPIIYSYKDEDMYNTMRKMICCAPHDSNAERHPSRIPSTIHSRSDTGSQYLEDSISQGQVCNKSSS</sequence>
<comment type="function">
    <text evidence="1">Receptor for lysophosphatidic acid (LPA), a mediator of diverse cellular activities. Seems to be coupled to the G(i)/G(o) and G(q) families of heteromeric G proteins (By similarity).</text>
</comment>
<comment type="subcellular location">
    <subcellularLocation>
        <location evidence="4">Cell membrane</location>
        <topology evidence="4">Multi-pass membrane protein</topology>
    </subcellularLocation>
</comment>
<comment type="similarity">
    <text evidence="3">Belongs to the G-protein coupled receptor 1 family.</text>
</comment>
<comment type="sequence caution" evidence="4">
    <conflict type="erroneous initiation">
        <sequence resource="EMBL-CDS" id="AAG24262"/>
    </conflict>
</comment>
<dbReference type="EMBL" id="AB051164">
    <property type="protein sequence ID" value="BAB91247.1"/>
    <property type="molecule type" value="mRNA"/>
</dbReference>
<dbReference type="EMBL" id="AF097733">
    <property type="protein sequence ID" value="AAG24262.1"/>
    <property type="status" value="ALT_INIT"/>
    <property type="molecule type" value="mRNA"/>
</dbReference>
<dbReference type="RefSeq" id="NP_076459.1">
    <property type="nucleotide sequence ID" value="NM_023969.1"/>
</dbReference>
<dbReference type="RefSeq" id="XP_006233531.1">
    <property type="nucleotide sequence ID" value="XM_006233469.5"/>
</dbReference>
<dbReference type="RefSeq" id="XP_006233532.1">
    <property type="nucleotide sequence ID" value="XM_006233470.5"/>
</dbReference>
<dbReference type="RefSeq" id="XP_008759744.1">
    <property type="nucleotide sequence ID" value="XM_008761522.1"/>
</dbReference>
<dbReference type="RefSeq" id="XP_008759745.1">
    <property type="nucleotide sequence ID" value="XM_008761523.2"/>
</dbReference>
<dbReference type="RefSeq" id="XP_017446585.1">
    <property type="nucleotide sequence ID" value="XM_017591096.1"/>
</dbReference>
<dbReference type="RefSeq" id="XP_017446586.1">
    <property type="nucleotide sequence ID" value="XM_017591097.1"/>
</dbReference>
<dbReference type="RefSeq" id="XP_038959043.1">
    <property type="nucleotide sequence ID" value="XM_039103115.1"/>
</dbReference>
<dbReference type="SMR" id="Q8K5E0"/>
<dbReference type="FunCoup" id="Q8K5E0">
    <property type="interactions" value="702"/>
</dbReference>
<dbReference type="STRING" id="10116.ENSRNOP00000020656"/>
<dbReference type="BindingDB" id="Q8K5E0"/>
<dbReference type="ChEMBL" id="CHEMBL4424"/>
<dbReference type="GlyCosmos" id="Q8K5E0">
    <property type="glycosylation" value="2 sites, No reported glycans"/>
</dbReference>
<dbReference type="GlyGen" id="Q8K5E0">
    <property type="glycosylation" value="2 sites"/>
</dbReference>
<dbReference type="PhosphoSitePlus" id="Q8K5E0"/>
<dbReference type="PaxDb" id="10116-ENSRNOP00000020656"/>
<dbReference type="GeneID" id="66025"/>
<dbReference type="KEGG" id="rno:66025"/>
<dbReference type="AGR" id="RGD:620565"/>
<dbReference type="CTD" id="23566"/>
<dbReference type="RGD" id="620565">
    <property type="gene designation" value="Lpar3"/>
</dbReference>
<dbReference type="eggNOG" id="KOG3656">
    <property type="taxonomic scope" value="Eukaryota"/>
</dbReference>
<dbReference type="HOGENOM" id="CLU_047979_0_0_1"/>
<dbReference type="InParanoid" id="Q8K5E0"/>
<dbReference type="PhylomeDB" id="Q8K5E0"/>
<dbReference type="TreeFam" id="TF330052"/>
<dbReference type="Reactome" id="R-RNO-416476">
    <property type="pathway name" value="G alpha (q) signalling events"/>
</dbReference>
<dbReference type="Reactome" id="R-RNO-418594">
    <property type="pathway name" value="G alpha (i) signalling events"/>
</dbReference>
<dbReference type="Reactome" id="R-RNO-419408">
    <property type="pathway name" value="Lysosphingolipid and LPA receptors"/>
</dbReference>
<dbReference type="PRO" id="PR:Q8K5E0"/>
<dbReference type="Proteomes" id="UP000002494">
    <property type="component" value="Chromosome 2"/>
</dbReference>
<dbReference type="Bgee" id="ENSRNOG00000015260">
    <property type="expression patterns" value="Expressed in adult mammalian kidney and 16 other cell types or tissues"/>
</dbReference>
<dbReference type="GO" id="GO:0030424">
    <property type="term" value="C:axon"/>
    <property type="evidence" value="ECO:0000266"/>
    <property type="project" value="RGD"/>
</dbReference>
<dbReference type="GO" id="GO:0005929">
    <property type="term" value="C:cilium"/>
    <property type="evidence" value="ECO:0007669"/>
    <property type="project" value="Ensembl"/>
</dbReference>
<dbReference type="GO" id="GO:0005737">
    <property type="term" value="C:cytoplasm"/>
    <property type="evidence" value="ECO:0000318"/>
    <property type="project" value="GO_Central"/>
</dbReference>
<dbReference type="GO" id="GO:0005886">
    <property type="term" value="C:plasma membrane"/>
    <property type="evidence" value="ECO:0000318"/>
    <property type="project" value="GO_Central"/>
</dbReference>
<dbReference type="GO" id="GO:0004930">
    <property type="term" value="F:G protein-coupled receptor activity"/>
    <property type="evidence" value="ECO:0000318"/>
    <property type="project" value="GO_Central"/>
</dbReference>
<dbReference type="GO" id="GO:0001965">
    <property type="term" value="F:G-protein alpha-subunit binding"/>
    <property type="evidence" value="ECO:0000315"/>
    <property type="project" value="RGD"/>
</dbReference>
<dbReference type="GO" id="GO:0070915">
    <property type="term" value="F:lysophosphatidic acid receptor activity"/>
    <property type="evidence" value="ECO:0007669"/>
    <property type="project" value="InterPro"/>
</dbReference>
<dbReference type="GO" id="GO:0005543">
    <property type="term" value="F:phospholipid binding"/>
    <property type="evidence" value="ECO:0000315"/>
    <property type="project" value="RGD"/>
</dbReference>
<dbReference type="GO" id="GO:0007189">
    <property type="term" value="P:adenylate cyclase-activating G protein-coupled receptor signaling pathway"/>
    <property type="evidence" value="ECO:0000318"/>
    <property type="project" value="GO_Central"/>
</dbReference>
<dbReference type="GO" id="GO:0032060">
    <property type="term" value="P:bleb assembly"/>
    <property type="evidence" value="ECO:0000266"/>
    <property type="project" value="RGD"/>
</dbReference>
<dbReference type="GO" id="GO:0048668">
    <property type="term" value="P:collateral sprouting"/>
    <property type="evidence" value="ECO:0000266"/>
    <property type="project" value="RGD"/>
</dbReference>
<dbReference type="GO" id="GO:0007186">
    <property type="term" value="P:G protein-coupled receptor signaling pathway"/>
    <property type="evidence" value="ECO:0000315"/>
    <property type="project" value="RGD"/>
</dbReference>
<dbReference type="GO" id="GO:0010467">
    <property type="term" value="P:gene expression"/>
    <property type="evidence" value="ECO:0000266"/>
    <property type="project" value="RGD"/>
</dbReference>
<dbReference type="GO" id="GO:0051928">
    <property type="term" value="P:positive regulation of calcium ion transport"/>
    <property type="evidence" value="ECO:0000315"/>
    <property type="project" value="RGD"/>
</dbReference>
<dbReference type="GO" id="GO:0048672">
    <property type="term" value="P:positive regulation of collateral sprouting"/>
    <property type="evidence" value="ECO:0000266"/>
    <property type="project" value="RGD"/>
</dbReference>
<dbReference type="GO" id="GO:0043410">
    <property type="term" value="P:positive regulation of MAPK cascade"/>
    <property type="evidence" value="ECO:0000266"/>
    <property type="project" value="RGD"/>
</dbReference>
<dbReference type="GO" id="GO:0019222">
    <property type="term" value="P:regulation of metabolic process"/>
    <property type="evidence" value="ECO:0000318"/>
    <property type="project" value="GO_Central"/>
</dbReference>
<dbReference type="CDD" id="cd15343">
    <property type="entry name" value="7tmA_LPAR3_Edg7"/>
    <property type="match status" value="1"/>
</dbReference>
<dbReference type="FunFam" id="1.20.1070.10:FF:000025">
    <property type="entry name" value="Lysophosphatidic acid receptor 1"/>
    <property type="match status" value="1"/>
</dbReference>
<dbReference type="Gene3D" id="1.20.1070.10">
    <property type="entry name" value="Rhodopsin 7-helix transmembrane proteins"/>
    <property type="match status" value="1"/>
</dbReference>
<dbReference type="InterPro" id="IPR000276">
    <property type="entry name" value="GPCR_Rhodpsn"/>
</dbReference>
<dbReference type="InterPro" id="IPR017452">
    <property type="entry name" value="GPCR_Rhodpsn_7TM"/>
</dbReference>
<dbReference type="InterPro" id="IPR004065">
    <property type="entry name" value="LPA_rcpt"/>
</dbReference>
<dbReference type="InterPro" id="IPR005385">
    <property type="entry name" value="LPA_rcpt_EDG7"/>
</dbReference>
<dbReference type="PANTHER" id="PTHR22750">
    <property type="entry name" value="G-PROTEIN COUPLED RECEPTOR"/>
    <property type="match status" value="1"/>
</dbReference>
<dbReference type="Pfam" id="PF00001">
    <property type="entry name" value="7tm_1"/>
    <property type="match status" value="1"/>
</dbReference>
<dbReference type="PRINTS" id="PR01560">
    <property type="entry name" value="EDG7RECEPTOR"/>
</dbReference>
<dbReference type="PRINTS" id="PR00237">
    <property type="entry name" value="GPCRRHODOPSN"/>
</dbReference>
<dbReference type="PRINTS" id="PR01527">
    <property type="entry name" value="LPARECEPTOR"/>
</dbReference>
<dbReference type="SMART" id="SM01381">
    <property type="entry name" value="7TM_GPCR_Srsx"/>
    <property type="match status" value="1"/>
</dbReference>
<dbReference type="SUPFAM" id="SSF81321">
    <property type="entry name" value="Family A G protein-coupled receptor-like"/>
    <property type="match status" value="1"/>
</dbReference>
<dbReference type="PROSITE" id="PS00237">
    <property type="entry name" value="G_PROTEIN_RECEP_F1_1"/>
    <property type="match status" value="1"/>
</dbReference>
<dbReference type="PROSITE" id="PS50262">
    <property type="entry name" value="G_PROTEIN_RECEP_F1_2"/>
    <property type="match status" value="1"/>
</dbReference>
<reference key="1">
    <citation type="submission" date="2000-11" db="EMBL/GenBank/DDBJ databases">
        <title>Molecular cloning of the rat EDG7 protein and its identification as a functional cellular receptor for lysophosphatidic acid.</title>
        <authorList>
            <person name="Higashioka M."/>
            <person name="Mori K."/>
        </authorList>
    </citation>
    <scope>NUCLEOTIDE SEQUENCE [MRNA]</scope>
    <source>
        <tissue>Testis</tissue>
    </source>
</reference>
<reference key="2">
    <citation type="submission" date="1998-10" db="EMBL/GenBank/DDBJ databases">
        <title>Identification and characterization of novel G-protein coupled receptors expressed in regenerating peripheral nerve.</title>
        <authorList>
            <person name="Carroll S.L."/>
            <person name="Miller M.L."/>
            <person name="Benedict-Hamilton H.M."/>
        </authorList>
    </citation>
    <scope>NUCLEOTIDE SEQUENCE [MRNA] OF 8-354</scope>
    <source>
        <strain>Sprague-Dawley</strain>
    </source>
</reference>
<organism>
    <name type="scientific">Rattus norvegicus</name>
    <name type="common">Rat</name>
    <dbReference type="NCBI Taxonomy" id="10116"/>
    <lineage>
        <taxon>Eukaryota</taxon>
        <taxon>Metazoa</taxon>
        <taxon>Chordata</taxon>
        <taxon>Craniata</taxon>
        <taxon>Vertebrata</taxon>
        <taxon>Euteleostomi</taxon>
        <taxon>Mammalia</taxon>
        <taxon>Eutheria</taxon>
        <taxon>Euarchontoglires</taxon>
        <taxon>Glires</taxon>
        <taxon>Rodentia</taxon>
        <taxon>Myomorpha</taxon>
        <taxon>Muroidea</taxon>
        <taxon>Muridae</taxon>
        <taxon>Murinae</taxon>
        <taxon>Rattus</taxon>
    </lineage>
</organism>
<evidence type="ECO:0000250" key="1"/>
<evidence type="ECO:0000255" key="2"/>
<evidence type="ECO:0000255" key="3">
    <source>
        <dbReference type="PROSITE-ProRule" id="PRU00521"/>
    </source>
</evidence>
<evidence type="ECO:0000305" key="4"/>